<gene>
    <name evidence="3 5" type="primary">Ufm1</name>
</gene>
<reference key="1">
    <citation type="journal article" date="2005" name="Science">
        <title>The transcriptional landscape of the mammalian genome.</title>
        <authorList>
            <person name="Carninci P."/>
            <person name="Kasukawa T."/>
            <person name="Katayama S."/>
            <person name="Gough J."/>
            <person name="Frith M.C."/>
            <person name="Maeda N."/>
            <person name="Oyama R."/>
            <person name="Ravasi T."/>
            <person name="Lenhard B."/>
            <person name="Wells C."/>
            <person name="Kodzius R."/>
            <person name="Shimokawa K."/>
            <person name="Bajic V.B."/>
            <person name="Brenner S.E."/>
            <person name="Batalov S."/>
            <person name="Forrest A.R."/>
            <person name="Zavolan M."/>
            <person name="Davis M.J."/>
            <person name="Wilming L.G."/>
            <person name="Aidinis V."/>
            <person name="Allen J.E."/>
            <person name="Ambesi-Impiombato A."/>
            <person name="Apweiler R."/>
            <person name="Aturaliya R.N."/>
            <person name="Bailey T.L."/>
            <person name="Bansal M."/>
            <person name="Baxter L."/>
            <person name="Beisel K.W."/>
            <person name="Bersano T."/>
            <person name="Bono H."/>
            <person name="Chalk A.M."/>
            <person name="Chiu K.P."/>
            <person name="Choudhary V."/>
            <person name="Christoffels A."/>
            <person name="Clutterbuck D.R."/>
            <person name="Crowe M.L."/>
            <person name="Dalla E."/>
            <person name="Dalrymple B.P."/>
            <person name="de Bono B."/>
            <person name="Della Gatta G."/>
            <person name="di Bernardo D."/>
            <person name="Down T."/>
            <person name="Engstrom P."/>
            <person name="Fagiolini M."/>
            <person name="Faulkner G."/>
            <person name="Fletcher C.F."/>
            <person name="Fukushima T."/>
            <person name="Furuno M."/>
            <person name="Futaki S."/>
            <person name="Gariboldi M."/>
            <person name="Georgii-Hemming P."/>
            <person name="Gingeras T.R."/>
            <person name="Gojobori T."/>
            <person name="Green R.E."/>
            <person name="Gustincich S."/>
            <person name="Harbers M."/>
            <person name="Hayashi Y."/>
            <person name="Hensch T.K."/>
            <person name="Hirokawa N."/>
            <person name="Hill D."/>
            <person name="Huminiecki L."/>
            <person name="Iacono M."/>
            <person name="Ikeo K."/>
            <person name="Iwama A."/>
            <person name="Ishikawa T."/>
            <person name="Jakt M."/>
            <person name="Kanapin A."/>
            <person name="Katoh M."/>
            <person name="Kawasawa Y."/>
            <person name="Kelso J."/>
            <person name="Kitamura H."/>
            <person name="Kitano H."/>
            <person name="Kollias G."/>
            <person name="Krishnan S.P."/>
            <person name="Kruger A."/>
            <person name="Kummerfeld S.K."/>
            <person name="Kurochkin I.V."/>
            <person name="Lareau L.F."/>
            <person name="Lazarevic D."/>
            <person name="Lipovich L."/>
            <person name="Liu J."/>
            <person name="Liuni S."/>
            <person name="McWilliam S."/>
            <person name="Madan Babu M."/>
            <person name="Madera M."/>
            <person name="Marchionni L."/>
            <person name="Matsuda H."/>
            <person name="Matsuzawa S."/>
            <person name="Miki H."/>
            <person name="Mignone F."/>
            <person name="Miyake S."/>
            <person name="Morris K."/>
            <person name="Mottagui-Tabar S."/>
            <person name="Mulder N."/>
            <person name="Nakano N."/>
            <person name="Nakauchi H."/>
            <person name="Ng P."/>
            <person name="Nilsson R."/>
            <person name="Nishiguchi S."/>
            <person name="Nishikawa S."/>
            <person name="Nori F."/>
            <person name="Ohara O."/>
            <person name="Okazaki Y."/>
            <person name="Orlando V."/>
            <person name="Pang K.C."/>
            <person name="Pavan W.J."/>
            <person name="Pavesi G."/>
            <person name="Pesole G."/>
            <person name="Petrovsky N."/>
            <person name="Piazza S."/>
            <person name="Reed J."/>
            <person name="Reid J.F."/>
            <person name="Ring B.Z."/>
            <person name="Ringwald M."/>
            <person name="Rost B."/>
            <person name="Ruan Y."/>
            <person name="Salzberg S.L."/>
            <person name="Sandelin A."/>
            <person name="Schneider C."/>
            <person name="Schoenbach C."/>
            <person name="Sekiguchi K."/>
            <person name="Semple C.A."/>
            <person name="Seno S."/>
            <person name="Sessa L."/>
            <person name="Sheng Y."/>
            <person name="Shibata Y."/>
            <person name="Shimada H."/>
            <person name="Shimada K."/>
            <person name="Silva D."/>
            <person name="Sinclair B."/>
            <person name="Sperling S."/>
            <person name="Stupka E."/>
            <person name="Sugiura K."/>
            <person name="Sultana R."/>
            <person name="Takenaka Y."/>
            <person name="Taki K."/>
            <person name="Tammoja K."/>
            <person name="Tan S.L."/>
            <person name="Tang S."/>
            <person name="Taylor M.S."/>
            <person name="Tegner J."/>
            <person name="Teichmann S.A."/>
            <person name="Ueda H.R."/>
            <person name="van Nimwegen E."/>
            <person name="Verardo R."/>
            <person name="Wei C.L."/>
            <person name="Yagi K."/>
            <person name="Yamanishi H."/>
            <person name="Zabarovsky E."/>
            <person name="Zhu S."/>
            <person name="Zimmer A."/>
            <person name="Hide W."/>
            <person name="Bult C."/>
            <person name="Grimmond S.M."/>
            <person name="Teasdale R.D."/>
            <person name="Liu E.T."/>
            <person name="Brusic V."/>
            <person name="Quackenbush J."/>
            <person name="Wahlestedt C."/>
            <person name="Mattick J.S."/>
            <person name="Hume D.A."/>
            <person name="Kai C."/>
            <person name="Sasaki D."/>
            <person name="Tomaru Y."/>
            <person name="Fukuda S."/>
            <person name="Kanamori-Katayama M."/>
            <person name="Suzuki M."/>
            <person name="Aoki J."/>
            <person name="Arakawa T."/>
            <person name="Iida J."/>
            <person name="Imamura K."/>
            <person name="Itoh M."/>
            <person name="Kato T."/>
            <person name="Kawaji H."/>
            <person name="Kawagashira N."/>
            <person name="Kawashima T."/>
            <person name="Kojima M."/>
            <person name="Kondo S."/>
            <person name="Konno H."/>
            <person name="Nakano K."/>
            <person name="Ninomiya N."/>
            <person name="Nishio T."/>
            <person name="Okada M."/>
            <person name="Plessy C."/>
            <person name="Shibata K."/>
            <person name="Shiraki T."/>
            <person name="Suzuki S."/>
            <person name="Tagami M."/>
            <person name="Waki K."/>
            <person name="Watahiki A."/>
            <person name="Okamura-Oho Y."/>
            <person name="Suzuki H."/>
            <person name="Kawai J."/>
            <person name="Hayashizaki Y."/>
        </authorList>
    </citation>
    <scope>NUCLEOTIDE SEQUENCE [LARGE SCALE MRNA]</scope>
    <source>
        <strain>BALB/cJ</strain>
        <strain>C57BL/6J</strain>
        <tissue>Mammary gland</tissue>
        <tissue>Pancreas</tissue>
        <tissue>Placenta</tissue>
        <tissue>Small intestine</tissue>
    </source>
</reference>
<reference key="2">
    <citation type="journal article" date="2004" name="Genome Res.">
        <title>The status, quality, and expansion of the NIH full-length cDNA project: the Mammalian Gene Collection (MGC).</title>
        <authorList>
            <consortium name="The MGC Project Team"/>
        </authorList>
    </citation>
    <scope>NUCLEOTIDE SEQUENCE [LARGE SCALE MRNA]</scope>
    <source>
        <tissue>Brain</tissue>
    </source>
</reference>
<reference key="3">
    <citation type="journal article" date="2010" name="Cell">
        <title>A tissue-specific atlas of mouse protein phosphorylation and expression.</title>
        <authorList>
            <person name="Huttlin E.L."/>
            <person name="Jedrychowski M.P."/>
            <person name="Elias J.E."/>
            <person name="Goswami T."/>
            <person name="Rad R."/>
            <person name="Beausoleil S.A."/>
            <person name="Villen J."/>
            <person name="Haas W."/>
            <person name="Sowa M.E."/>
            <person name="Gygi S.P."/>
        </authorList>
    </citation>
    <scope>IDENTIFICATION BY MASS SPECTROMETRY [LARGE SCALE ANALYSIS]</scope>
    <source>
        <tissue>Brain</tissue>
        <tissue>Brown adipose tissue</tissue>
        <tissue>Heart</tissue>
        <tissue>Kidney</tissue>
        <tissue>Liver</tissue>
        <tissue>Lung</tissue>
        <tissue>Pancreas</tissue>
        <tissue>Spleen</tissue>
        <tissue>Testis</tissue>
    </source>
</reference>
<reference key="4">
    <citation type="submission" date="2002-11" db="PDB data bank">
        <title>Solution structure of mouse hypothetical 9.1 kDa protein, a ubiquitin-like fold.</title>
        <authorList>
            <consortium name="RIKEN structural genomics initiative (RSGI)"/>
        </authorList>
    </citation>
    <scope>STRUCTURE BY NMR</scope>
</reference>
<reference key="5">
    <citation type="journal article" date="2011" name="PLoS ONE">
        <title>Ubiquitin fold modifier 1 (UFM1) and its target UFBP1 protect pancreatic beta cells from ER stress-induced apoptosis.</title>
        <authorList>
            <person name="Lemaire K."/>
            <person name="Moura R.F."/>
            <person name="Granvik M."/>
            <person name="Igoillo-Esteve M."/>
            <person name="Hohmeier H.E."/>
            <person name="Hendrickx N."/>
            <person name="Newgard C.B."/>
            <person name="Waelkens E."/>
            <person name="Cnop M."/>
            <person name="Schuit F."/>
        </authorList>
    </citation>
    <scope>FUNCTION</scope>
    <scope>SUBCELLULAR LOCATION</scope>
    <scope>TISSUE SPECIFICITY</scope>
</reference>
<evidence type="ECO:0000250" key="1">
    <source>
        <dbReference type="UniProtKB" id="P61960"/>
    </source>
</evidence>
<evidence type="ECO:0000269" key="2">
    <source>
    </source>
</evidence>
<evidence type="ECO:0000303" key="3">
    <source>
    </source>
</evidence>
<evidence type="ECO:0000305" key="4"/>
<evidence type="ECO:0000312" key="5">
    <source>
        <dbReference type="MGI" id="MGI:1915140"/>
    </source>
</evidence>
<evidence type="ECO:0007829" key="6">
    <source>
        <dbReference type="PDB" id="1J0G"/>
    </source>
</evidence>
<keyword id="KW-0002">3D-structure</keyword>
<keyword id="KW-0963">Cytoplasm</keyword>
<keyword id="KW-1017">Isopeptide bond</keyword>
<keyword id="KW-0539">Nucleus</keyword>
<keyword id="KW-1185">Reference proteome</keyword>
<keyword id="KW-0832">Ubl conjugation</keyword>
<keyword id="KW-0833">Ubl conjugation pathway</keyword>
<comment type="function">
    <text evidence="1 2">Ubiquitin-like modifier which can be covalently attached via an isopeptide bond to lysine residues of substrate proteins as a monomer or a lysine-linked polymer (PubMed:21494687). The so-called ufmylation, requires the UFM1-activating E1 enzyme UBA5, the UFM1-conjugating E2 enzyme UFC1, and the UFM1-ligase E3 enzyme UFL1 (By similarity). Ufmylation is involved in various processes, such as ribosome recycling, response to DNA damage, transcription or reticulophagy (also called ER-phagy) induced in response to endoplasmic reticulum stress (By similarity).</text>
</comment>
<comment type="subunit">
    <text evidence="1">Interacts with UBA5. Interacts with UFC1.</text>
</comment>
<comment type="subcellular location">
    <subcellularLocation>
        <location evidence="2">Nucleus</location>
    </subcellularLocation>
    <subcellularLocation>
        <location evidence="2">Cytoplasm</location>
    </subcellularLocation>
</comment>
<comment type="tissue specificity">
    <text evidence="2">Widely expressed with higher expression in secretory tissues (at protein level).</text>
</comment>
<comment type="PTM">
    <text evidence="1">UFM1 precursor is cleaved by UFSP1, promoting its maturation: processing of the C-terminal Ser-Cys dipeptide is required to expose its C-terminal conserved Gly residue.</text>
</comment>
<comment type="similarity">
    <text evidence="4">Belongs to the UFM1 family.</text>
</comment>
<protein>
    <recommendedName>
        <fullName evidence="3">Ubiquitin-fold modifier 1</fullName>
    </recommendedName>
</protein>
<dbReference type="EMBL" id="AK007788">
    <property type="protein sequence ID" value="BAB25255.1"/>
    <property type="molecule type" value="mRNA"/>
</dbReference>
<dbReference type="EMBL" id="AK008280">
    <property type="protein sequence ID" value="BAB25572.1"/>
    <property type="molecule type" value="mRNA"/>
</dbReference>
<dbReference type="EMBL" id="AK089948">
    <property type="protein sequence ID" value="BAC41011.1"/>
    <property type="molecule type" value="mRNA"/>
</dbReference>
<dbReference type="EMBL" id="AK148146">
    <property type="protein sequence ID" value="BAE28374.1"/>
    <property type="molecule type" value="mRNA"/>
</dbReference>
<dbReference type="EMBL" id="AK166332">
    <property type="protein sequence ID" value="BAE38712.1"/>
    <property type="molecule type" value="mRNA"/>
</dbReference>
<dbReference type="EMBL" id="AK167301">
    <property type="protein sequence ID" value="BAE39406.1"/>
    <property type="molecule type" value="mRNA"/>
</dbReference>
<dbReference type="EMBL" id="AK167321">
    <property type="protein sequence ID" value="BAE39423.1"/>
    <property type="molecule type" value="mRNA"/>
</dbReference>
<dbReference type="EMBL" id="BC061065">
    <property type="protein sequence ID" value="AAH61065.1"/>
    <property type="molecule type" value="mRNA"/>
</dbReference>
<dbReference type="CCDS" id="CCDS38430.1"/>
<dbReference type="RefSeq" id="NP_080711.1">
    <property type="nucleotide sequence ID" value="NM_026435.5"/>
</dbReference>
<dbReference type="PDB" id="1J0G">
    <property type="method" value="NMR"/>
    <property type="chains" value="A=1-85"/>
</dbReference>
<dbReference type="PDBsum" id="1J0G"/>
<dbReference type="SMR" id="P61961"/>
<dbReference type="BioGRID" id="212514">
    <property type="interactions" value="15"/>
</dbReference>
<dbReference type="FunCoup" id="P61961">
    <property type="interactions" value="3486"/>
</dbReference>
<dbReference type="STRING" id="10090.ENSMUSP00000118478"/>
<dbReference type="iPTMnet" id="P61961"/>
<dbReference type="PhosphoSitePlus" id="P61961"/>
<dbReference type="jPOST" id="P61961"/>
<dbReference type="PaxDb" id="10090-ENSMUSP00000118478"/>
<dbReference type="PeptideAtlas" id="P61961"/>
<dbReference type="ProteomicsDB" id="300190"/>
<dbReference type="Pumba" id="P61961"/>
<dbReference type="TopDownProteomics" id="P61961"/>
<dbReference type="Antibodypedia" id="42138">
    <property type="antibodies" value="74 antibodies from 23 providers"/>
</dbReference>
<dbReference type="DNASU" id="67890"/>
<dbReference type="Ensembl" id="ENSMUST00000146598.8">
    <property type="protein sequence ID" value="ENSMUSP00000118478.2"/>
    <property type="gene ID" value="ENSMUSG00000027746.14"/>
</dbReference>
<dbReference type="GeneID" id="67890"/>
<dbReference type="KEGG" id="mmu:67890"/>
<dbReference type="UCSC" id="uc008pfa.2">
    <property type="organism name" value="mouse"/>
</dbReference>
<dbReference type="AGR" id="MGI:1915140"/>
<dbReference type="CTD" id="51569"/>
<dbReference type="MGI" id="MGI:1915140">
    <property type="gene designation" value="Ufm1"/>
</dbReference>
<dbReference type="VEuPathDB" id="HostDB:ENSMUSG00000027746"/>
<dbReference type="eggNOG" id="KOG3483">
    <property type="taxonomic scope" value="Eukaryota"/>
</dbReference>
<dbReference type="GeneTree" id="ENSGT00390000010391"/>
<dbReference type="HOGENOM" id="CLU_175114_0_0_1"/>
<dbReference type="InParanoid" id="P61961"/>
<dbReference type="OMA" id="MEHAVGK"/>
<dbReference type="OrthoDB" id="284357at2759"/>
<dbReference type="PhylomeDB" id="P61961"/>
<dbReference type="TreeFam" id="TF312934"/>
<dbReference type="BioGRID-ORCS" id="67890">
    <property type="hits" value="14 hits in 79 CRISPR screens"/>
</dbReference>
<dbReference type="ChiTaRS" id="Ufm1">
    <property type="organism name" value="mouse"/>
</dbReference>
<dbReference type="EvolutionaryTrace" id="P61961"/>
<dbReference type="PRO" id="PR:P61961"/>
<dbReference type="Proteomes" id="UP000000589">
    <property type="component" value="Chromosome 3"/>
</dbReference>
<dbReference type="RNAct" id="P61961">
    <property type="molecule type" value="protein"/>
</dbReference>
<dbReference type="Bgee" id="ENSMUSG00000027746">
    <property type="expression patterns" value="Expressed in ectoplacental cone and 243 other cell types or tissues"/>
</dbReference>
<dbReference type="ExpressionAtlas" id="P61961">
    <property type="expression patterns" value="baseline and differential"/>
</dbReference>
<dbReference type="GO" id="GO:0005737">
    <property type="term" value="C:cytoplasm"/>
    <property type="evidence" value="ECO:0000314"/>
    <property type="project" value="UniProtKB"/>
</dbReference>
<dbReference type="GO" id="GO:0005783">
    <property type="term" value="C:endoplasmic reticulum"/>
    <property type="evidence" value="ECO:0000314"/>
    <property type="project" value="ParkinsonsUK-UCL"/>
</dbReference>
<dbReference type="GO" id="GO:0005634">
    <property type="term" value="C:nucleus"/>
    <property type="evidence" value="ECO:0000314"/>
    <property type="project" value="UniProtKB"/>
</dbReference>
<dbReference type="GO" id="GO:0007420">
    <property type="term" value="P:brain development"/>
    <property type="evidence" value="ECO:0000250"/>
    <property type="project" value="UniProtKB"/>
</dbReference>
<dbReference type="GO" id="GO:0043066">
    <property type="term" value="P:negative regulation of apoptotic process"/>
    <property type="evidence" value="ECO:0007669"/>
    <property type="project" value="Ensembl"/>
</dbReference>
<dbReference type="GO" id="GO:0042308">
    <property type="term" value="P:negative regulation of protein import into nucleus"/>
    <property type="evidence" value="ECO:0007669"/>
    <property type="project" value="Ensembl"/>
</dbReference>
<dbReference type="GO" id="GO:1990592">
    <property type="term" value="P:protein K69-linked ufmylation"/>
    <property type="evidence" value="ECO:0000250"/>
    <property type="project" value="UniProtKB"/>
</dbReference>
<dbReference type="GO" id="GO:0071569">
    <property type="term" value="P:protein ufmylation"/>
    <property type="evidence" value="ECO:0000314"/>
    <property type="project" value="UniProtKB"/>
</dbReference>
<dbReference type="GO" id="GO:0033146">
    <property type="term" value="P:regulation of intracellular estrogen receptor signaling pathway"/>
    <property type="evidence" value="ECO:0000250"/>
    <property type="project" value="UniProtKB"/>
</dbReference>
<dbReference type="GO" id="GO:0034976">
    <property type="term" value="P:response to endoplasmic reticulum stress"/>
    <property type="evidence" value="ECO:0000315"/>
    <property type="project" value="UniProtKB"/>
</dbReference>
<dbReference type="GO" id="GO:0061709">
    <property type="term" value="P:reticulophagy"/>
    <property type="evidence" value="ECO:0000250"/>
    <property type="project" value="UniProtKB"/>
</dbReference>
<dbReference type="CDD" id="cd01766">
    <property type="entry name" value="Ubl_UFM1"/>
    <property type="match status" value="1"/>
</dbReference>
<dbReference type="FunFam" id="3.10.20.90:FF:000044">
    <property type="entry name" value="Ubiquitin-fold modifier 1"/>
    <property type="match status" value="1"/>
</dbReference>
<dbReference type="Gene3D" id="3.10.20.90">
    <property type="entry name" value="Phosphatidylinositol 3-kinase Catalytic Subunit, Chain A, domain 1"/>
    <property type="match status" value="1"/>
</dbReference>
<dbReference type="InterPro" id="IPR029071">
    <property type="entry name" value="Ubiquitin-like_domsf"/>
</dbReference>
<dbReference type="InterPro" id="IPR005375">
    <property type="entry name" value="UFM1"/>
</dbReference>
<dbReference type="PANTHER" id="PTHR15825">
    <property type="entry name" value="UBIQUITIN-FOLD MODIFIER 1"/>
    <property type="match status" value="1"/>
</dbReference>
<dbReference type="PANTHER" id="PTHR15825:SF5">
    <property type="entry name" value="UBIQUITIN-FOLD MODIFIER 1"/>
    <property type="match status" value="1"/>
</dbReference>
<dbReference type="Pfam" id="PF03671">
    <property type="entry name" value="Ufm1"/>
    <property type="match status" value="1"/>
</dbReference>
<dbReference type="PIRSF" id="PIRSF038027">
    <property type="entry name" value="Ubiquitin-like_Ufm1"/>
    <property type="match status" value="1"/>
</dbReference>
<dbReference type="SUPFAM" id="SSF54236">
    <property type="entry name" value="Ubiquitin-like"/>
    <property type="match status" value="1"/>
</dbReference>
<organism>
    <name type="scientific">Mus musculus</name>
    <name type="common">Mouse</name>
    <dbReference type="NCBI Taxonomy" id="10090"/>
    <lineage>
        <taxon>Eukaryota</taxon>
        <taxon>Metazoa</taxon>
        <taxon>Chordata</taxon>
        <taxon>Craniata</taxon>
        <taxon>Vertebrata</taxon>
        <taxon>Euteleostomi</taxon>
        <taxon>Mammalia</taxon>
        <taxon>Eutheria</taxon>
        <taxon>Euarchontoglires</taxon>
        <taxon>Glires</taxon>
        <taxon>Rodentia</taxon>
        <taxon>Myomorpha</taxon>
        <taxon>Muroidea</taxon>
        <taxon>Muridae</taxon>
        <taxon>Murinae</taxon>
        <taxon>Mus</taxon>
        <taxon>Mus</taxon>
    </lineage>
</organism>
<proteinExistence type="evidence at protein level"/>
<accession>P61961</accession>
<accession>Q14346</accession>
<accession>Q3TLT0</accession>
<accession>Q542A7</accession>
<accession>Q9CPX2</accession>
<accession>Q9NZF2</accession>
<feature type="chain" id="PRO_0000042126" description="Ubiquitin-fold modifier 1">
    <location>
        <begin position="1"/>
        <end position="83"/>
    </location>
</feature>
<feature type="propeptide" id="PRO_0000042127" description="Removed in mature form" evidence="1">
    <location>
        <begin position="84"/>
        <end position="85"/>
    </location>
</feature>
<feature type="cross-link" description="Glycyl lysine isopeptide (Lys-Gly) (interchain with G-Cter in UFM1)" evidence="1">
    <location>
        <position position="69"/>
    </location>
</feature>
<feature type="cross-link" description="Glycyl lysine isopeptide (Gly-Lys) (interchain with K-? in acceptor proteins)" evidence="1">
    <location>
        <position position="83"/>
    </location>
</feature>
<feature type="strand" evidence="6">
    <location>
        <begin position="3"/>
        <end position="10"/>
    </location>
</feature>
<feature type="strand" evidence="6">
    <location>
        <begin position="18"/>
        <end position="24"/>
    </location>
</feature>
<feature type="helix" evidence="6">
    <location>
        <begin position="29"/>
        <end position="39"/>
    </location>
</feature>
<feature type="strand" evidence="6">
    <location>
        <begin position="44"/>
        <end position="50"/>
    </location>
</feature>
<feature type="strand" evidence="6">
    <location>
        <begin position="60"/>
        <end position="62"/>
    </location>
</feature>
<feature type="helix" evidence="6">
    <location>
        <begin position="63"/>
        <end position="69"/>
    </location>
</feature>
<feature type="strand" evidence="6">
    <location>
        <begin position="72"/>
        <end position="78"/>
    </location>
</feature>
<name>UFM1_MOUSE</name>
<sequence>MSKVSFKITLTSDPRLPYKVLSVPESTPFTAVLKFAAEEFKVPAATSAIITNDGIGINPAQTAGNVFLKHGSELRIIPRDRVGSC</sequence>